<feature type="chain" id="PRO_0000278397" description="DNA replication complex GINS protein PSF1">
    <location>
        <begin position="1"/>
        <end position="213"/>
    </location>
</feature>
<accession>Q2HDQ7</accession>
<gene>
    <name type="primary">PSF1</name>
    <name type="ORF">CHGG_01647</name>
</gene>
<keyword id="KW-0235">DNA replication</keyword>
<keyword id="KW-0539">Nucleus</keyword>
<keyword id="KW-1185">Reference proteome</keyword>
<name>PSF1_CHAGB</name>
<sequence>MPMYGDLGNKLVQHAKRTQNLTHLPPYQTELVRAVTREVRDLDKDVASLLEPFQGSFDPSTDQATACTLLVNHLSMRRNKRCLLAYHRTRTDKLEELVWNGSDVLDLAGQQAGGVNGAAADSGAGSSLSPQEEDYFRQYGDLLSAYKGQWTDIDLTGSLEPPRDLFIDVRVLKDAGEIQTEYGAINLTKNSQFYVRQGDVERLIAQGYLQKLG</sequence>
<evidence type="ECO:0000250" key="1"/>
<evidence type="ECO:0000305" key="2"/>
<protein>
    <recommendedName>
        <fullName>DNA replication complex GINS protein PSF1</fullName>
    </recommendedName>
</protein>
<organism>
    <name type="scientific">Chaetomium globosum (strain ATCC 6205 / CBS 148.51 / DSM 1962 / NBRC 6347 / NRRL 1970)</name>
    <name type="common">Soil fungus</name>
    <dbReference type="NCBI Taxonomy" id="306901"/>
    <lineage>
        <taxon>Eukaryota</taxon>
        <taxon>Fungi</taxon>
        <taxon>Dikarya</taxon>
        <taxon>Ascomycota</taxon>
        <taxon>Pezizomycotina</taxon>
        <taxon>Sordariomycetes</taxon>
        <taxon>Sordariomycetidae</taxon>
        <taxon>Sordariales</taxon>
        <taxon>Chaetomiaceae</taxon>
        <taxon>Chaetomium</taxon>
    </lineage>
</organism>
<comment type="function">
    <text evidence="1">The GINS complex plays an essential role in the initiation of DNA replication.</text>
</comment>
<comment type="subunit">
    <text evidence="1">Component of the GINS complex which is a heterotetramer of SLD5, PSF1, PSF2 and PSF3.</text>
</comment>
<comment type="subcellular location">
    <subcellularLocation>
        <location evidence="1">Nucleus</location>
    </subcellularLocation>
</comment>
<comment type="similarity">
    <text evidence="2">Belongs to the GINS1/PSF1 family.</text>
</comment>
<dbReference type="EMBL" id="CH408029">
    <property type="protein sequence ID" value="EAQ93412.1"/>
    <property type="molecule type" value="Genomic_DNA"/>
</dbReference>
<dbReference type="RefSeq" id="XP_001220868.1">
    <property type="nucleotide sequence ID" value="XM_001220867.1"/>
</dbReference>
<dbReference type="SMR" id="Q2HDQ7"/>
<dbReference type="FunCoup" id="Q2HDQ7">
    <property type="interactions" value="389"/>
</dbReference>
<dbReference type="STRING" id="306901.Q2HDQ7"/>
<dbReference type="GeneID" id="4388014"/>
<dbReference type="VEuPathDB" id="FungiDB:CHGG_01647"/>
<dbReference type="eggNOG" id="KOG3303">
    <property type="taxonomic scope" value="Eukaryota"/>
</dbReference>
<dbReference type="HOGENOM" id="CLU_079191_0_0_1"/>
<dbReference type="InParanoid" id="Q2HDQ7"/>
<dbReference type="OMA" id="MFCEKAT"/>
<dbReference type="OrthoDB" id="10252587at2759"/>
<dbReference type="Proteomes" id="UP000001056">
    <property type="component" value="Unassembled WGS sequence"/>
</dbReference>
<dbReference type="GO" id="GO:0071162">
    <property type="term" value="C:CMG complex"/>
    <property type="evidence" value="ECO:0007669"/>
    <property type="project" value="EnsemblFungi"/>
</dbReference>
<dbReference type="GO" id="GO:0000811">
    <property type="term" value="C:GINS complex"/>
    <property type="evidence" value="ECO:0007669"/>
    <property type="project" value="EnsemblFungi"/>
</dbReference>
<dbReference type="GO" id="GO:0043596">
    <property type="term" value="C:nuclear replication fork"/>
    <property type="evidence" value="ECO:0007669"/>
    <property type="project" value="EnsemblFungi"/>
</dbReference>
<dbReference type="GO" id="GO:1902983">
    <property type="term" value="P:DNA strand elongation involved in mitotic DNA replication"/>
    <property type="evidence" value="ECO:0007669"/>
    <property type="project" value="EnsemblFungi"/>
</dbReference>
<dbReference type="GO" id="GO:0000727">
    <property type="term" value="P:double-strand break repair via break-induced replication"/>
    <property type="evidence" value="ECO:0007669"/>
    <property type="project" value="EnsemblFungi"/>
</dbReference>
<dbReference type="GO" id="GO:1902975">
    <property type="term" value="P:mitotic DNA replication initiation"/>
    <property type="evidence" value="ECO:0007669"/>
    <property type="project" value="EnsemblFungi"/>
</dbReference>
<dbReference type="CDD" id="cd11710">
    <property type="entry name" value="GINS_A_psf1"/>
    <property type="match status" value="1"/>
</dbReference>
<dbReference type="CDD" id="cd21696">
    <property type="entry name" value="GINS_B_Psf1"/>
    <property type="match status" value="1"/>
</dbReference>
<dbReference type="FunFam" id="1.20.58.1030:FF:000003">
    <property type="entry name" value="DNA replication complex GINS protein PSF1"/>
    <property type="match status" value="1"/>
</dbReference>
<dbReference type="Gene3D" id="1.20.58.1030">
    <property type="match status" value="1"/>
</dbReference>
<dbReference type="InterPro" id="IPR021151">
    <property type="entry name" value="GINS_A"/>
</dbReference>
<dbReference type="InterPro" id="IPR036224">
    <property type="entry name" value="GINS_bundle-like_dom_sf"/>
</dbReference>
<dbReference type="InterPro" id="IPR005339">
    <property type="entry name" value="GINS_Psf1"/>
</dbReference>
<dbReference type="InterPro" id="IPR056783">
    <property type="entry name" value="PSF1_C"/>
</dbReference>
<dbReference type="PANTHER" id="PTHR12914:SF2">
    <property type="entry name" value="DNA REPLICATION COMPLEX GINS PROTEIN PSF1"/>
    <property type="match status" value="1"/>
</dbReference>
<dbReference type="PANTHER" id="PTHR12914">
    <property type="entry name" value="PARTNER OF SLD5"/>
    <property type="match status" value="1"/>
</dbReference>
<dbReference type="Pfam" id="PF24997">
    <property type="entry name" value="PSF1_C"/>
    <property type="match status" value="1"/>
</dbReference>
<dbReference type="Pfam" id="PF05916">
    <property type="entry name" value="Sld5"/>
    <property type="match status" value="1"/>
</dbReference>
<dbReference type="SUPFAM" id="SSF158573">
    <property type="entry name" value="GINS helical bundle-like"/>
    <property type="match status" value="1"/>
</dbReference>
<reference key="1">
    <citation type="journal article" date="2015" name="Genome Announc.">
        <title>Draft genome sequence of the cellulolytic fungus Chaetomium globosum.</title>
        <authorList>
            <person name="Cuomo C.A."/>
            <person name="Untereiner W.A."/>
            <person name="Ma L.-J."/>
            <person name="Grabherr M."/>
            <person name="Birren B.W."/>
        </authorList>
    </citation>
    <scope>NUCLEOTIDE SEQUENCE [LARGE SCALE GENOMIC DNA]</scope>
    <source>
        <strain>ATCC 6205 / CBS 148.51 / DSM 1962 / NBRC 6347 / NRRL 1970</strain>
    </source>
</reference>
<proteinExistence type="inferred from homology"/>